<name>BH119_ARATH</name>
<gene>
    <name type="primary">BHLH119</name>
    <name type="synonym">EN104</name>
    <name type="ordered locus">At4g28811</name>
    <name type="ORF">F16A16.80</name>
</gene>
<accession>Q8GT73</accession>
<accession>Q9SVU8</accession>
<protein>
    <recommendedName>
        <fullName>Transcription factor bHLH119</fullName>
    </recommendedName>
    <alternativeName>
        <fullName>Basic helix-loop-helix protein 119</fullName>
        <shortName>AtbHLH119</shortName>
        <shortName>bHLH 119</shortName>
    </alternativeName>
    <alternativeName>
        <fullName>Transcription factor EN 104</fullName>
    </alternativeName>
    <alternativeName>
        <fullName>bHLH transcription factor bHLH119</fullName>
    </alternativeName>
</protein>
<dbReference type="EMBL" id="AL035353">
    <property type="protein sequence ID" value="CAA22971.1"/>
    <property type="status" value="ALT_SEQ"/>
    <property type="molecule type" value="Genomic_DNA"/>
</dbReference>
<dbReference type="EMBL" id="AL161573">
    <property type="protein sequence ID" value="CAB81469.1"/>
    <property type="status" value="ALT_SEQ"/>
    <property type="molecule type" value="Genomic_DNA"/>
</dbReference>
<dbReference type="EMBL" id="CP002687">
    <property type="protein sequence ID" value="AEE85547.1"/>
    <property type="molecule type" value="Genomic_DNA"/>
</dbReference>
<dbReference type="EMBL" id="AJ519811">
    <property type="protein sequence ID" value="CAD58595.1"/>
    <property type="molecule type" value="mRNA"/>
</dbReference>
<dbReference type="PIR" id="H85335">
    <property type="entry name" value="H85335"/>
</dbReference>
<dbReference type="PIR" id="T04518">
    <property type="entry name" value="T04518"/>
</dbReference>
<dbReference type="RefSeq" id="NP_001078462.1">
    <property type="nucleotide sequence ID" value="NM_001084993.1"/>
</dbReference>
<dbReference type="SMR" id="Q8GT73"/>
<dbReference type="FunCoup" id="Q8GT73">
    <property type="interactions" value="74"/>
</dbReference>
<dbReference type="STRING" id="3702.Q8GT73"/>
<dbReference type="GlyGen" id="Q8GT73">
    <property type="glycosylation" value="3 sites"/>
</dbReference>
<dbReference type="iPTMnet" id="Q8GT73"/>
<dbReference type="PaxDb" id="3702-AT4G28811.1"/>
<dbReference type="EnsemblPlants" id="AT4G28811.1">
    <property type="protein sequence ID" value="AT4G28811.1"/>
    <property type="gene ID" value="AT4G28811"/>
</dbReference>
<dbReference type="GeneID" id="5008170"/>
<dbReference type="Gramene" id="AT4G28811.1">
    <property type="protein sequence ID" value="AT4G28811.1"/>
    <property type="gene ID" value="AT4G28811"/>
</dbReference>
<dbReference type="KEGG" id="ath:AT4G28811"/>
<dbReference type="Araport" id="AT4G28811"/>
<dbReference type="TAIR" id="AT4G28811"/>
<dbReference type="eggNOG" id="ENOG502QR6A">
    <property type="taxonomic scope" value="Eukaryota"/>
</dbReference>
<dbReference type="HOGENOM" id="CLU_030314_0_0_1"/>
<dbReference type="InParanoid" id="Q8GT73"/>
<dbReference type="OMA" id="MQRFMPS"/>
<dbReference type="PhylomeDB" id="Q8GT73"/>
<dbReference type="PRO" id="PR:Q8GT73"/>
<dbReference type="Proteomes" id="UP000006548">
    <property type="component" value="Chromosome 4"/>
</dbReference>
<dbReference type="ExpressionAtlas" id="Q8GT73">
    <property type="expression patterns" value="baseline and differential"/>
</dbReference>
<dbReference type="GO" id="GO:0005634">
    <property type="term" value="C:nucleus"/>
    <property type="evidence" value="ECO:0007669"/>
    <property type="project" value="UniProtKB-SubCell"/>
</dbReference>
<dbReference type="GO" id="GO:0003677">
    <property type="term" value="F:DNA binding"/>
    <property type="evidence" value="ECO:0007669"/>
    <property type="project" value="UniProtKB-KW"/>
</dbReference>
<dbReference type="GO" id="GO:0003700">
    <property type="term" value="F:DNA-binding transcription factor activity"/>
    <property type="evidence" value="ECO:0007669"/>
    <property type="project" value="InterPro"/>
</dbReference>
<dbReference type="GO" id="GO:0046983">
    <property type="term" value="F:protein dimerization activity"/>
    <property type="evidence" value="ECO:0007669"/>
    <property type="project" value="InterPro"/>
</dbReference>
<dbReference type="GO" id="GO:0010017">
    <property type="term" value="P:red or far-red light signaling pathway"/>
    <property type="evidence" value="ECO:0007669"/>
    <property type="project" value="UniProtKB-ARBA"/>
</dbReference>
<dbReference type="CDD" id="cd11445">
    <property type="entry name" value="bHLH_AtPIF_like"/>
    <property type="match status" value="1"/>
</dbReference>
<dbReference type="FunFam" id="4.10.280.10:FF:000004">
    <property type="entry name" value="Basic helix-loop-helix transcription factor"/>
    <property type="match status" value="1"/>
</dbReference>
<dbReference type="Gene3D" id="4.10.280.10">
    <property type="entry name" value="Helix-loop-helix DNA-binding domain"/>
    <property type="match status" value="1"/>
</dbReference>
<dbReference type="InterPro" id="IPR011598">
    <property type="entry name" value="bHLH_dom"/>
</dbReference>
<dbReference type="InterPro" id="IPR036638">
    <property type="entry name" value="HLH_DNA-bd_sf"/>
</dbReference>
<dbReference type="InterPro" id="IPR047265">
    <property type="entry name" value="PIF1-like_bHLH"/>
</dbReference>
<dbReference type="InterPro" id="IPR044273">
    <property type="entry name" value="PIF3-like"/>
</dbReference>
<dbReference type="PANTHER" id="PTHR46807:SF8">
    <property type="entry name" value="TRANSCRIPTION FACTOR PIF1-LIKE ISOFORM X2"/>
    <property type="match status" value="1"/>
</dbReference>
<dbReference type="PANTHER" id="PTHR46807">
    <property type="entry name" value="TRANSCRIPTION FACTOR PIF3"/>
    <property type="match status" value="1"/>
</dbReference>
<dbReference type="Pfam" id="PF00010">
    <property type="entry name" value="HLH"/>
    <property type="match status" value="1"/>
</dbReference>
<dbReference type="SMART" id="SM00353">
    <property type="entry name" value="HLH"/>
    <property type="match status" value="1"/>
</dbReference>
<dbReference type="SUPFAM" id="SSF47459">
    <property type="entry name" value="HLH, helix-loop-helix DNA-binding domain"/>
    <property type="match status" value="1"/>
</dbReference>
<dbReference type="PROSITE" id="PS50888">
    <property type="entry name" value="BHLH"/>
    <property type="match status" value="1"/>
</dbReference>
<feature type="chain" id="PRO_0000358804" description="Transcription factor bHLH119">
    <location>
        <begin position="1"/>
        <end position="544"/>
    </location>
</feature>
<feature type="domain" description="bHLH" evidence="2">
    <location>
        <begin position="357"/>
        <end position="406"/>
    </location>
</feature>
<feature type="region of interest" description="Disordered" evidence="3">
    <location>
        <begin position="12"/>
        <end position="59"/>
    </location>
</feature>
<feature type="region of interest" description="Disordered" evidence="3">
    <location>
        <begin position="185"/>
        <end position="208"/>
    </location>
</feature>
<feature type="region of interest" description="Disordered" evidence="3">
    <location>
        <begin position="342"/>
        <end position="364"/>
    </location>
</feature>
<feature type="region of interest" description="Disordered" evidence="3">
    <location>
        <begin position="522"/>
        <end position="544"/>
    </location>
</feature>
<feature type="compositionally biased region" description="Polar residues" evidence="3">
    <location>
        <begin position="15"/>
        <end position="29"/>
    </location>
</feature>
<feature type="compositionally biased region" description="Pro residues" evidence="3">
    <location>
        <begin position="50"/>
        <end position="59"/>
    </location>
</feature>
<feature type="compositionally biased region" description="Low complexity" evidence="3">
    <location>
        <begin position="522"/>
        <end position="535"/>
    </location>
</feature>
<feature type="modified residue" description="Phosphothreonine" evidence="1">
    <location>
        <position position="269"/>
    </location>
</feature>
<feature type="modified residue" description="Phosphoserine" evidence="1">
    <location>
        <position position="274"/>
    </location>
</feature>
<feature type="modified residue" description="Phosphoserine" evidence="1">
    <location>
        <position position="541"/>
    </location>
</feature>
<feature type="modified residue" description="Phosphoserine" evidence="1">
    <location>
        <position position="543"/>
    </location>
</feature>
<sequence length="544" mass="59686">MGEDDIVELLWNGQVVRTSQPQRPSSGKPSPTPPILRGSGSGSGEENAPLPLPLLQPPRPLHHQNLFIREEEMSSWLHYSYTGVTSTPATHPQSSVSLPPPPPIAPSEDDVVELLWKSGQVVQSIQTQRPIPPPIFRGSGSGGGEETVLPLPPLHPSHQNIFIQEDEMASWLYHPLRQDYFSSGVASTSATRPQSSASLAPTPPPPSVPYGQIPVERRTENFMNFLRLRGNIFSGGRVEAGPVVIESTQIGSSATPSSSAAESCVIPATHGTESRAAAITGVSRTFAVPGLGRRGKEVATETAGTSYSGVNKAETERVQIQPERETKITEDKKREETIAEIQGTEEAHGSTSRKRSRAADMHNLSERRRRERINERMKTLQELLPRCRKTDKVSMLEDVIEYVKSLQLQIQMMSMGHGMMPPMMHEGNTQQFMPHMAMGMKGMNRPPPFVPFPGKTFPRPGHMAGVGPSYPALRYPFPDTQASDLSRVHVPSLHSNPVPNQPRFPAYINPYSQFVGLHQMQQPPLPLQGQPTSQPSFSHASTSK</sequence>
<reference key="1">
    <citation type="journal article" date="1999" name="Nature">
        <title>Sequence and analysis of chromosome 4 of the plant Arabidopsis thaliana.</title>
        <authorList>
            <person name="Mayer K.F.X."/>
            <person name="Schueller C."/>
            <person name="Wambutt R."/>
            <person name="Murphy G."/>
            <person name="Volckaert G."/>
            <person name="Pohl T."/>
            <person name="Duesterhoeft A."/>
            <person name="Stiekema W."/>
            <person name="Entian K.-D."/>
            <person name="Terryn N."/>
            <person name="Harris B."/>
            <person name="Ansorge W."/>
            <person name="Brandt P."/>
            <person name="Grivell L.A."/>
            <person name="Rieger M."/>
            <person name="Weichselgartner M."/>
            <person name="de Simone V."/>
            <person name="Obermaier B."/>
            <person name="Mache R."/>
            <person name="Mueller M."/>
            <person name="Kreis M."/>
            <person name="Delseny M."/>
            <person name="Puigdomenech P."/>
            <person name="Watson M."/>
            <person name="Schmidtheini T."/>
            <person name="Reichert B."/>
            <person name="Portetelle D."/>
            <person name="Perez-Alonso M."/>
            <person name="Boutry M."/>
            <person name="Bancroft I."/>
            <person name="Vos P."/>
            <person name="Hoheisel J."/>
            <person name="Zimmermann W."/>
            <person name="Wedler H."/>
            <person name="Ridley P."/>
            <person name="Langham S.-A."/>
            <person name="McCullagh B."/>
            <person name="Bilham L."/>
            <person name="Robben J."/>
            <person name="van der Schueren J."/>
            <person name="Grymonprez B."/>
            <person name="Chuang Y.-J."/>
            <person name="Vandenbussche F."/>
            <person name="Braeken M."/>
            <person name="Weltjens I."/>
            <person name="Voet M."/>
            <person name="Bastiaens I."/>
            <person name="Aert R."/>
            <person name="Defoor E."/>
            <person name="Weitzenegger T."/>
            <person name="Bothe G."/>
            <person name="Ramsperger U."/>
            <person name="Hilbert H."/>
            <person name="Braun M."/>
            <person name="Holzer E."/>
            <person name="Brandt A."/>
            <person name="Peters S."/>
            <person name="van Staveren M."/>
            <person name="Dirkse W."/>
            <person name="Mooijman P."/>
            <person name="Klein Lankhorst R."/>
            <person name="Rose M."/>
            <person name="Hauf J."/>
            <person name="Koetter P."/>
            <person name="Berneiser S."/>
            <person name="Hempel S."/>
            <person name="Feldpausch M."/>
            <person name="Lamberth S."/>
            <person name="Van den Daele H."/>
            <person name="De Keyser A."/>
            <person name="Buysshaert C."/>
            <person name="Gielen J."/>
            <person name="Villarroel R."/>
            <person name="De Clercq R."/>
            <person name="van Montagu M."/>
            <person name="Rogers J."/>
            <person name="Cronin A."/>
            <person name="Quail M.A."/>
            <person name="Bray-Allen S."/>
            <person name="Clark L."/>
            <person name="Doggett J."/>
            <person name="Hall S."/>
            <person name="Kay M."/>
            <person name="Lennard N."/>
            <person name="McLay K."/>
            <person name="Mayes R."/>
            <person name="Pettett A."/>
            <person name="Rajandream M.A."/>
            <person name="Lyne M."/>
            <person name="Benes V."/>
            <person name="Rechmann S."/>
            <person name="Borkova D."/>
            <person name="Bloecker H."/>
            <person name="Scharfe M."/>
            <person name="Grimm M."/>
            <person name="Loehnert T.-H."/>
            <person name="Dose S."/>
            <person name="de Haan M."/>
            <person name="Maarse A.C."/>
            <person name="Schaefer M."/>
            <person name="Mueller-Auer S."/>
            <person name="Gabel C."/>
            <person name="Fuchs M."/>
            <person name="Fartmann B."/>
            <person name="Granderath K."/>
            <person name="Dauner D."/>
            <person name="Herzl A."/>
            <person name="Neumann S."/>
            <person name="Argiriou A."/>
            <person name="Vitale D."/>
            <person name="Liguori R."/>
            <person name="Piravandi E."/>
            <person name="Massenet O."/>
            <person name="Quigley F."/>
            <person name="Clabauld G."/>
            <person name="Muendlein A."/>
            <person name="Felber R."/>
            <person name="Schnabl S."/>
            <person name="Hiller R."/>
            <person name="Schmidt W."/>
            <person name="Lecharny A."/>
            <person name="Aubourg S."/>
            <person name="Chefdor F."/>
            <person name="Cooke R."/>
            <person name="Berger C."/>
            <person name="Monfort A."/>
            <person name="Casacuberta E."/>
            <person name="Gibbons T."/>
            <person name="Weber N."/>
            <person name="Vandenbol M."/>
            <person name="Bargues M."/>
            <person name="Terol J."/>
            <person name="Torres A."/>
            <person name="Perez-Perez A."/>
            <person name="Purnelle B."/>
            <person name="Bent E."/>
            <person name="Johnson S."/>
            <person name="Tacon D."/>
            <person name="Jesse T."/>
            <person name="Heijnen L."/>
            <person name="Schwarz S."/>
            <person name="Scholler P."/>
            <person name="Heber S."/>
            <person name="Francs P."/>
            <person name="Bielke C."/>
            <person name="Frishman D."/>
            <person name="Haase D."/>
            <person name="Lemcke K."/>
            <person name="Mewes H.-W."/>
            <person name="Stocker S."/>
            <person name="Zaccaria P."/>
            <person name="Bevan M."/>
            <person name="Wilson R.K."/>
            <person name="de la Bastide M."/>
            <person name="Habermann K."/>
            <person name="Parnell L."/>
            <person name="Dedhia N."/>
            <person name="Gnoj L."/>
            <person name="Schutz K."/>
            <person name="Huang E."/>
            <person name="Spiegel L."/>
            <person name="Sekhon M."/>
            <person name="Murray J."/>
            <person name="Sheet P."/>
            <person name="Cordes M."/>
            <person name="Abu-Threideh J."/>
            <person name="Stoneking T."/>
            <person name="Kalicki J."/>
            <person name="Graves T."/>
            <person name="Harmon G."/>
            <person name="Edwards J."/>
            <person name="Latreille P."/>
            <person name="Courtney L."/>
            <person name="Cloud J."/>
            <person name="Abbott A."/>
            <person name="Scott K."/>
            <person name="Johnson D."/>
            <person name="Minx P."/>
            <person name="Bentley D."/>
            <person name="Fulton B."/>
            <person name="Miller N."/>
            <person name="Greco T."/>
            <person name="Kemp K."/>
            <person name="Kramer J."/>
            <person name="Fulton L."/>
            <person name="Mardis E."/>
            <person name="Dante M."/>
            <person name="Pepin K."/>
            <person name="Hillier L.W."/>
            <person name="Nelson J."/>
            <person name="Spieth J."/>
            <person name="Ryan E."/>
            <person name="Andrews S."/>
            <person name="Geisel C."/>
            <person name="Layman D."/>
            <person name="Du H."/>
            <person name="Ali J."/>
            <person name="Berghoff A."/>
            <person name="Jones K."/>
            <person name="Drone K."/>
            <person name="Cotton M."/>
            <person name="Joshu C."/>
            <person name="Antonoiu B."/>
            <person name="Zidanic M."/>
            <person name="Strong C."/>
            <person name="Sun H."/>
            <person name="Lamar B."/>
            <person name="Yordan C."/>
            <person name="Ma P."/>
            <person name="Zhong J."/>
            <person name="Preston R."/>
            <person name="Vil D."/>
            <person name="Shekher M."/>
            <person name="Matero A."/>
            <person name="Shah R."/>
            <person name="Swaby I.K."/>
            <person name="O'Shaughnessy A."/>
            <person name="Rodriguez M."/>
            <person name="Hoffman J."/>
            <person name="Till S."/>
            <person name="Granat S."/>
            <person name="Shohdy N."/>
            <person name="Hasegawa A."/>
            <person name="Hameed A."/>
            <person name="Lodhi M."/>
            <person name="Johnson A."/>
            <person name="Chen E."/>
            <person name="Marra M.A."/>
            <person name="Martienssen R."/>
            <person name="McCombie W.R."/>
        </authorList>
    </citation>
    <scope>NUCLEOTIDE SEQUENCE [LARGE SCALE GENOMIC DNA]</scope>
    <source>
        <strain>cv. Columbia</strain>
    </source>
</reference>
<reference key="2">
    <citation type="journal article" date="2017" name="Plant J.">
        <title>Araport11: a complete reannotation of the Arabidopsis thaliana reference genome.</title>
        <authorList>
            <person name="Cheng C.Y."/>
            <person name="Krishnakumar V."/>
            <person name="Chan A.P."/>
            <person name="Thibaud-Nissen F."/>
            <person name="Schobel S."/>
            <person name="Town C.D."/>
        </authorList>
    </citation>
    <scope>GENOME REANNOTATION</scope>
    <source>
        <strain>cv. Columbia</strain>
    </source>
</reference>
<reference key="3">
    <citation type="journal article" date="2003" name="Mol. Biol. Evol.">
        <title>The basic helix-loop-helix transcription factor family in plants: a genome-wide study of protein structure and functional diversity.</title>
        <authorList>
            <person name="Heim M.A."/>
            <person name="Jakoby M."/>
            <person name="Werber M."/>
            <person name="Martin C."/>
            <person name="Weisshaar B."/>
            <person name="Bailey P.C."/>
        </authorList>
    </citation>
    <scope>NUCLEOTIDE SEQUENCE [MRNA] OF 370-544</scope>
    <scope>GENE FAMILY</scope>
    <scope>NOMENCLATURE</scope>
    <source>
        <strain>cv. Columbia</strain>
    </source>
</reference>
<reference key="4">
    <citation type="journal article" date="2003" name="Plant Cell">
        <title>The Arabidopsis basic/helix-loop-helix transcription factor family.</title>
        <authorList>
            <person name="Toledo-Ortiz G."/>
            <person name="Huq E."/>
            <person name="Quail P.H."/>
        </authorList>
    </citation>
    <scope>GENE FAMILY</scope>
</reference>
<reference key="5">
    <citation type="journal article" date="2003" name="Plant Cell">
        <title>Update on the basic helix-loop-helix transcription factor gene family in Arabidopsis thaliana.</title>
        <authorList>
            <person name="Bailey P.C."/>
            <person name="Martin C."/>
            <person name="Toledo-Ortiz G."/>
            <person name="Quail P.H."/>
            <person name="Huq E."/>
            <person name="Heim M.A."/>
            <person name="Jakoby M."/>
            <person name="Werber M."/>
            <person name="Weisshaar B."/>
        </authorList>
    </citation>
    <scope>GENE FAMILY</scope>
    <scope>NOMENCLATURE</scope>
</reference>
<proteinExistence type="evidence at transcript level"/>
<organism>
    <name type="scientific">Arabidopsis thaliana</name>
    <name type="common">Mouse-ear cress</name>
    <dbReference type="NCBI Taxonomy" id="3702"/>
    <lineage>
        <taxon>Eukaryota</taxon>
        <taxon>Viridiplantae</taxon>
        <taxon>Streptophyta</taxon>
        <taxon>Embryophyta</taxon>
        <taxon>Tracheophyta</taxon>
        <taxon>Spermatophyta</taxon>
        <taxon>Magnoliopsida</taxon>
        <taxon>eudicotyledons</taxon>
        <taxon>Gunneridae</taxon>
        <taxon>Pentapetalae</taxon>
        <taxon>rosids</taxon>
        <taxon>malvids</taxon>
        <taxon>Brassicales</taxon>
        <taxon>Brassicaceae</taxon>
        <taxon>Camelineae</taxon>
        <taxon>Arabidopsis</taxon>
    </lineage>
</organism>
<evidence type="ECO:0000250" key="1">
    <source>
        <dbReference type="UniProtKB" id="Q8GZM7"/>
    </source>
</evidence>
<evidence type="ECO:0000255" key="2">
    <source>
        <dbReference type="PROSITE-ProRule" id="PRU00981"/>
    </source>
</evidence>
<evidence type="ECO:0000256" key="3">
    <source>
        <dbReference type="SAM" id="MobiDB-lite"/>
    </source>
</evidence>
<evidence type="ECO:0000305" key="4"/>
<comment type="subunit">
    <text evidence="4">Homodimer.</text>
</comment>
<comment type="subcellular location">
    <subcellularLocation>
        <location evidence="2">Nucleus</location>
    </subcellularLocation>
</comment>
<comment type="sequence caution" evidence="4">
    <conflict type="erroneous gene model prediction">
        <sequence resource="EMBL-CDS" id="CAA22971"/>
    </conflict>
    <text>The predicted gene At4g28810 has been split into 2 genes: At4g28811 and At4g28815.</text>
</comment>
<comment type="sequence caution" evidence="4">
    <conflict type="erroneous gene model prediction">
        <sequence resource="EMBL-CDS" id="CAB81469"/>
    </conflict>
    <text>The predicted gene At4g28810 has been split into 2 genes: At4g28811 and At4g28815.</text>
</comment>
<keyword id="KW-0238">DNA-binding</keyword>
<keyword id="KW-0539">Nucleus</keyword>
<keyword id="KW-0597">Phosphoprotein</keyword>
<keyword id="KW-1185">Reference proteome</keyword>
<keyword id="KW-0804">Transcription</keyword>
<keyword id="KW-0805">Transcription regulation</keyword>